<keyword id="KW-0030">Aminoacyl-tRNA synthetase</keyword>
<keyword id="KW-0067">ATP-binding</keyword>
<keyword id="KW-0963">Cytoplasm</keyword>
<keyword id="KW-0436">Ligase</keyword>
<keyword id="KW-0547">Nucleotide-binding</keyword>
<keyword id="KW-0648">Protein biosynthesis</keyword>
<keyword id="KW-1185">Reference proteome</keyword>
<dbReference type="EC" id="6.1.1.4" evidence="1"/>
<dbReference type="EMBL" id="L42023">
    <property type="protein sequence ID" value="AAC22581.1"/>
    <property type="molecule type" value="Genomic_DNA"/>
</dbReference>
<dbReference type="PIR" id="H64102">
    <property type="entry name" value="H64102"/>
</dbReference>
<dbReference type="RefSeq" id="NP_439081.1">
    <property type="nucleotide sequence ID" value="NC_000907.1"/>
</dbReference>
<dbReference type="SMR" id="P43827"/>
<dbReference type="STRING" id="71421.HI_0921"/>
<dbReference type="EnsemblBacteria" id="AAC22581">
    <property type="protein sequence ID" value="AAC22581"/>
    <property type="gene ID" value="HI_0921"/>
</dbReference>
<dbReference type="KEGG" id="hin:HI_0921"/>
<dbReference type="PATRIC" id="fig|71421.8.peg.962"/>
<dbReference type="eggNOG" id="COG0495">
    <property type="taxonomic scope" value="Bacteria"/>
</dbReference>
<dbReference type="HOGENOM" id="CLU_004427_0_0_6"/>
<dbReference type="OrthoDB" id="9810365at2"/>
<dbReference type="PhylomeDB" id="P43827"/>
<dbReference type="BioCyc" id="HINF71421:G1GJ1-960-MONOMER"/>
<dbReference type="Proteomes" id="UP000000579">
    <property type="component" value="Chromosome"/>
</dbReference>
<dbReference type="GO" id="GO:0005829">
    <property type="term" value="C:cytosol"/>
    <property type="evidence" value="ECO:0000318"/>
    <property type="project" value="GO_Central"/>
</dbReference>
<dbReference type="GO" id="GO:0002161">
    <property type="term" value="F:aminoacyl-tRNA deacylase activity"/>
    <property type="evidence" value="ECO:0007669"/>
    <property type="project" value="InterPro"/>
</dbReference>
<dbReference type="GO" id="GO:0005524">
    <property type="term" value="F:ATP binding"/>
    <property type="evidence" value="ECO:0007669"/>
    <property type="project" value="UniProtKB-UniRule"/>
</dbReference>
<dbReference type="GO" id="GO:0004823">
    <property type="term" value="F:leucine-tRNA ligase activity"/>
    <property type="evidence" value="ECO:0000318"/>
    <property type="project" value="GO_Central"/>
</dbReference>
<dbReference type="GO" id="GO:0006429">
    <property type="term" value="P:leucyl-tRNA aminoacylation"/>
    <property type="evidence" value="ECO:0000318"/>
    <property type="project" value="GO_Central"/>
</dbReference>
<dbReference type="CDD" id="cd07958">
    <property type="entry name" value="Anticodon_Ia_Leu_BEm"/>
    <property type="match status" value="1"/>
</dbReference>
<dbReference type="CDD" id="cd00812">
    <property type="entry name" value="LeuRS_core"/>
    <property type="match status" value="1"/>
</dbReference>
<dbReference type="FunFam" id="1.10.730.10:FF:000003">
    <property type="entry name" value="Leucine--tRNA ligase"/>
    <property type="match status" value="1"/>
</dbReference>
<dbReference type="FunFam" id="2.20.28.290:FF:000001">
    <property type="entry name" value="Leucine--tRNA ligase"/>
    <property type="match status" value="1"/>
</dbReference>
<dbReference type="FunFam" id="3.10.20.590:FF:000001">
    <property type="entry name" value="Leucine--tRNA ligase"/>
    <property type="match status" value="1"/>
</dbReference>
<dbReference type="FunFam" id="3.40.50.620:FF:000003">
    <property type="entry name" value="Leucine--tRNA ligase"/>
    <property type="match status" value="1"/>
</dbReference>
<dbReference type="FunFam" id="3.40.50.620:FF:000051">
    <property type="entry name" value="Leucine--tRNA ligase"/>
    <property type="match status" value="1"/>
</dbReference>
<dbReference type="FunFam" id="3.90.740.10:FF:000012">
    <property type="entry name" value="Leucine--tRNA ligase"/>
    <property type="match status" value="1"/>
</dbReference>
<dbReference type="Gene3D" id="2.20.28.290">
    <property type="match status" value="1"/>
</dbReference>
<dbReference type="Gene3D" id="3.10.20.590">
    <property type="match status" value="1"/>
</dbReference>
<dbReference type="Gene3D" id="3.40.50.620">
    <property type="entry name" value="HUPs"/>
    <property type="match status" value="2"/>
</dbReference>
<dbReference type="Gene3D" id="1.10.730.10">
    <property type="entry name" value="Isoleucyl-tRNA Synthetase, Domain 1"/>
    <property type="match status" value="2"/>
</dbReference>
<dbReference type="HAMAP" id="MF_00049_B">
    <property type="entry name" value="Leu_tRNA_synth_B"/>
    <property type="match status" value="1"/>
</dbReference>
<dbReference type="InterPro" id="IPR001412">
    <property type="entry name" value="aa-tRNA-synth_I_CS"/>
</dbReference>
<dbReference type="InterPro" id="IPR002300">
    <property type="entry name" value="aa-tRNA-synth_Ia"/>
</dbReference>
<dbReference type="InterPro" id="IPR002302">
    <property type="entry name" value="Leu-tRNA-ligase"/>
</dbReference>
<dbReference type="InterPro" id="IPR025709">
    <property type="entry name" value="Leu_tRNA-synth_edit"/>
</dbReference>
<dbReference type="InterPro" id="IPR013155">
    <property type="entry name" value="M/V/L/I-tRNA-synth_anticd-bd"/>
</dbReference>
<dbReference type="InterPro" id="IPR015413">
    <property type="entry name" value="Methionyl/Leucyl_tRNA_Synth"/>
</dbReference>
<dbReference type="InterPro" id="IPR014729">
    <property type="entry name" value="Rossmann-like_a/b/a_fold"/>
</dbReference>
<dbReference type="InterPro" id="IPR009080">
    <property type="entry name" value="tRNAsynth_Ia_anticodon-bd"/>
</dbReference>
<dbReference type="InterPro" id="IPR009008">
    <property type="entry name" value="Val/Leu/Ile-tRNA-synth_edit"/>
</dbReference>
<dbReference type="NCBIfam" id="TIGR00396">
    <property type="entry name" value="leuS_bact"/>
    <property type="match status" value="1"/>
</dbReference>
<dbReference type="PANTHER" id="PTHR43740:SF2">
    <property type="entry name" value="LEUCINE--TRNA LIGASE, MITOCHONDRIAL"/>
    <property type="match status" value="1"/>
</dbReference>
<dbReference type="PANTHER" id="PTHR43740">
    <property type="entry name" value="LEUCYL-TRNA SYNTHETASE"/>
    <property type="match status" value="1"/>
</dbReference>
<dbReference type="Pfam" id="PF08264">
    <property type="entry name" value="Anticodon_1"/>
    <property type="match status" value="1"/>
</dbReference>
<dbReference type="Pfam" id="PF00133">
    <property type="entry name" value="tRNA-synt_1"/>
    <property type="match status" value="2"/>
</dbReference>
<dbReference type="Pfam" id="PF13603">
    <property type="entry name" value="tRNA-synt_1_2"/>
    <property type="match status" value="1"/>
</dbReference>
<dbReference type="Pfam" id="PF09334">
    <property type="entry name" value="tRNA-synt_1g"/>
    <property type="match status" value="1"/>
</dbReference>
<dbReference type="PRINTS" id="PR00985">
    <property type="entry name" value="TRNASYNTHLEU"/>
</dbReference>
<dbReference type="SUPFAM" id="SSF47323">
    <property type="entry name" value="Anticodon-binding domain of a subclass of class I aminoacyl-tRNA synthetases"/>
    <property type="match status" value="1"/>
</dbReference>
<dbReference type="SUPFAM" id="SSF52374">
    <property type="entry name" value="Nucleotidylyl transferase"/>
    <property type="match status" value="1"/>
</dbReference>
<dbReference type="SUPFAM" id="SSF50677">
    <property type="entry name" value="ValRS/IleRS/LeuRS editing domain"/>
    <property type="match status" value="1"/>
</dbReference>
<dbReference type="PROSITE" id="PS00178">
    <property type="entry name" value="AA_TRNA_LIGASE_I"/>
    <property type="match status" value="1"/>
</dbReference>
<protein>
    <recommendedName>
        <fullName evidence="1">Leucine--tRNA ligase</fullName>
        <ecNumber evidence="1">6.1.1.4</ecNumber>
    </recommendedName>
    <alternativeName>
        <fullName evidence="1">Leucyl-tRNA synthetase</fullName>
        <shortName evidence="1">LeuRS</shortName>
    </alternativeName>
</protein>
<comment type="catalytic activity">
    <reaction evidence="1">
        <text>tRNA(Leu) + L-leucine + ATP = L-leucyl-tRNA(Leu) + AMP + diphosphate</text>
        <dbReference type="Rhea" id="RHEA:11688"/>
        <dbReference type="Rhea" id="RHEA-COMP:9613"/>
        <dbReference type="Rhea" id="RHEA-COMP:9622"/>
        <dbReference type="ChEBI" id="CHEBI:30616"/>
        <dbReference type="ChEBI" id="CHEBI:33019"/>
        <dbReference type="ChEBI" id="CHEBI:57427"/>
        <dbReference type="ChEBI" id="CHEBI:78442"/>
        <dbReference type="ChEBI" id="CHEBI:78494"/>
        <dbReference type="ChEBI" id="CHEBI:456215"/>
        <dbReference type="EC" id="6.1.1.4"/>
    </reaction>
</comment>
<comment type="subcellular location">
    <subcellularLocation>
        <location evidence="1">Cytoplasm</location>
    </subcellularLocation>
</comment>
<comment type="similarity">
    <text evidence="1">Belongs to the class-I aminoacyl-tRNA synthetase family.</text>
</comment>
<feature type="chain" id="PRO_0000152023" description="Leucine--tRNA ligase">
    <location>
        <begin position="1"/>
        <end position="861"/>
    </location>
</feature>
<feature type="short sequence motif" description="'HIGH' region">
    <location>
        <begin position="42"/>
        <end position="52"/>
    </location>
</feature>
<feature type="short sequence motif" description="'KMSKS' region">
    <location>
        <begin position="619"/>
        <end position="623"/>
    </location>
</feature>
<feature type="binding site" evidence="1">
    <location>
        <position position="622"/>
    </location>
    <ligand>
        <name>ATP</name>
        <dbReference type="ChEBI" id="CHEBI:30616"/>
    </ligand>
</feature>
<name>SYL_HAEIN</name>
<reference key="1">
    <citation type="journal article" date="1995" name="Science">
        <title>Whole-genome random sequencing and assembly of Haemophilus influenzae Rd.</title>
        <authorList>
            <person name="Fleischmann R.D."/>
            <person name="Adams M.D."/>
            <person name="White O."/>
            <person name="Clayton R.A."/>
            <person name="Kirkness E.F."/>
            <person name="Kerlavage A.R."/>
            <person name="Bult C.J."/>
            <person name="Tomb J.-F."/>
            <person name="Dougherty B.A."/>
            <person name="Merrick J.M."/>
            <person name="McKenney K."/>
            <person name="Sutton G.G."/>
            <person name="FitzHugh W."/>
            <person name="Fields C.A."/>
            <person name="Gocayne J.D."/>
            <person name="Scott J.D."/>
            <person name="Shirley R."/>
            <person name="Liu L.-I."/>
            <person name="Glodek A."/>
            <person name="Kelley J.M."/>
            <person name="Weidman J.F."/>
            <person name="Phillips C.A."/>
            <person name="Spriggs T."/>
            <person name="Hedblom E."/>
            <person name="Cotton M.D."/>
            <person name="Utterback T.R."/>
            <person name="Hanna M.C."/>
            <person name="Nguyen D.T."/>
            <person name="Saudek D.M."/>
            <person name="Brandon R.C."/>
            <person name="Fine L.D."/>
            <person name="Fritchman J.L."/>
            <person name="Fuhrmann J.L."/>
            <person name="Geoghagen N.S.M."/>
            <person name="Gnehm C.L."/>
            <person name="McDonald L.A."/>
            <person name="Small K.V."/>
            <person name="Fraser C.M."/>
            <person name="Smith H.O."/>
            <person name="Venter J.C."/>
        </authorList>
    </citation>
    <scope>NUCLEOTIDE SEQUENCE [LARGE SCALE GENOMIC DNA]</scope>
    <source>
        <strain>ATCC 51907 / DSM 11121 / KW20 / Rd</strain>
    </source>
</reference>
<organism>
    <name type="scientific">Haemophilus influenzae (strain ATCC 51907 / DSM 11121 / KW20 / Rd)</name>
    <dbReference type="NCBI Taxonomy" id="71421"/>
    <lineage>
        <taxon>Bacteria</taxon>
        <taxon>Pseudomonadati</taxon>
        <taxon>Pseudomonadota</taxon>
        <taxon>Gammaproteobacteria</taxon>
        <taxon>Pasteurellales</taxon>
        <taxon>Pasteurellaceae</taxon>
        <taxon>Haemophilus</taxon>
    </lineage>
</organism>
<proteinExistence type="inferred from homology"/>
<sequence length="861" mass="97751">MQEQYRPDMIEPKVQQYWAENKVFKAIKDESKEKYYCLSMFPYPSGRLHMGHVRNYTIGDVISRYQRMLGKNVLQPFGWDAFGLPAEGAAIKNKTAPAKWTYENIAYMKKQLQLLGFGFDWDREIATCKPEYYKWEQWFFTELYKKGLVYKKTSTVNWCPNDETVLANEQVHEGCCWRCDTPVEQKEIPQWFIKITDYAEQLLGGLDTLPQWPDMVKTMQRNWIGRSEGVEITFDVANTNEKVAVYTTRPDTFYGVSYLGIAAAHPLASLAAQNNSELAAFIQEAKNAKVAEADLATMEKKGMATGLFAIHPLTGDKLPIWVANFVLMHYGTGAVMAVPAHDQRDFEFAQKYSLPIKQVIAPLADEEIDLTKQAFVEHGKLVNSDEFDGKNFDGAFNGIADKLEKLGVGKRQVNYRLRDWGVSRQRYWGAPIPMLTLENGDVVPAPMEDLPIILPEDVVMDGVKSPINADPNWAKTTFNDAPALKETDTFDTFMESSWYYARYTCPQYQNGMLDAEEANYWLPVDQYIGGIEHATMHLLYFRFFHKLLRDAGFVTSEEPADKLLCQGMVLADAFYYTSPTNERIWVSPTQVTLERDEKGRIIKATDPEGRELVHSGMTKMSKSKNNGIDPQEMVEKYGADTVRLFMMFASPAEMTLEWQESGVEGAKRFLGRVWNLVYQYQQNPAKTSLDLTALSAEQKVLRREVHKTIAKVSDDIGRRQTFNTAIAAVMELMNKLTKASLDSEQDRAVMAEALSAVVRMLYPITPHICFELWQALGNESAIDTAEWVKADEAAMVEDEKLIVVQVNGKVRGKVTVATDADEDTVKTIAFADENVKKFIDNQHIVKVIYVVGKLLNVVVKP</sequence>
<evidence type="ECO:0000255" key="1">
    <source>
        <dbReference type="HAMAP-Rule" id="MF_00049"/>
    </source>
</evidence>
<accession>P43827</accession>
<gene>
    <name evidence="1" type="primary">leuS</name>
    <name type="ordered locus">HI_0921</name>
</gene>